<evidence type="ECO:0000255" key="1"/>
<evidence type="ECO:0000269" key="2">
    <source>
    </source>
</evidence>
<evidence type="ECO:0000303" key="3">
    <source>
    </source>
</evidence>
<comment type="function">
    <text evidence="2">Vacuolar protein required for aerial conidiation and conidial maturation (PubMed:28557308). Also involved in blastospore production and cell cycle (PubMed:28557308). Plays a vital role in the secretion of Pr1 proteases for cuticular penetration and hence contributes significantly to host infection and virulence (PubMed:28557308).</text>
</comment>
<comment type="subcellular location">
    <subcellularLocation>
        <location evidence="2">Vacuole</location>
    </subcellularLocation>
    <text evidence="2">Localizes in vacuoles of germinating conidia, germ tubes and hyphal cells (PubMed:28557308).</text>
</comment>
<comment type="disruption phenotype">
    <text evidence="2">Affects proper autophagosome formation, asexual and blastospore development, and virulence (PubMed:28557308). Leads to severe defects in secretion of cuticle-degrading Pr1 proteases and melanisation of infected insects (PubMed:28557308). Reduces the transcript levels of all autophagy-related (ATG) genes including ATG1, ATG5 and ATG8, except unaffected ATG26 (PubMed:28557308).</text>
</comment>
<dbReference type="EMBL" id="JH725184">
    <property type="protein sequence ID" value="EJP62569.1"/>
    <property type="molecule type" value="Genomic_DNA"/>
</dbReference>
<dbReference type="RefSeq" id="XP_008601799.1">
    <property type="nucleotide sequence ID" value="XM_008603577.1"/>
</dbReference>
<dbReference type="STRING" id="655819.J4KLP6"/>
<dbReference type="GeneID" id="19891492"/>
<dbReference type="HOGENOM" id="CLU_087081_0_0_1"/>
<dbReference type="InParanoid" id="J4KLP6"/>
<dbReference type="OrthoDB" id="11949at474943"/>
<dbReference type="PHI-base" id="PHI:7192"/>
<dbReference type="Proteomes" id="UP000002762">
    <property type="component" value="Unassembled WGS sequence"/>
</dbReference>
<dbReference type="GO" id="GO:0005773">
    <property type="term" value="C:vacuole"/>
    <property type="evidence" value="ECO:0007669"/>
    <property type="project" value="UniProtKB-SubCell"/>
</dbReference>
<feature type="signal peptide" evidence="1">
    <location>
        <begin position="1"/>
        <end position="19"/>
    </location>
</feature>
<feature type="chain" id="PRO_5003779112" description="Vacuole-localized protein 4">
    <location>
        <begin position="20"/>
        <end position="230"/>
    </location>
</feature>
<proteinExistence type="inferred from homology"/>
<reference key="1">
    <citation type="journal article" date="2012" name="Sci. Rep.">
        <title>Genomic perspectives on the evolution of fungal entomopathogenicity in Beauveria bassiana.</title>
        <authorList>
            <person name="Xiao G."/>
            <person name="Ying S.-H."/>
            <person name="Zheng P."/>
            <person name="Wang Z.-L."/>
            <person name="Zhang S."/>
            <person name="Xie X.-Q."/>
            <person name="Shang Y."/>
            <person name="St Leger R.J."/>
            <person name="Zhao G.-P."/>
            <person name="Wang C."/>
            <person name="Feng M.-G."/>
        </authorList>
    </citation>
    <scope>NUCLEOTIDE SEQUENCE [LARGE SCALE GENOMIC DNA]</scope>
    <source>
        <strain>ARSEF 2860</strain>
    </source>
</reference>
<reference key="2">
    <citation type="journal article" date="2017" name="Environ. Microbiol.">
        <title>Discovery of a new intravacuolar protein required for the autophagy, development and virulence of Beauveria bassiana.</title>
        <authorList>
            <person name="Chu Z.J."/>
            <person name="Sun H.H."/>
            <person name="Zhu X.G."/>
            <person name="Ying S.H."/>
            <person name="Feng M.G."/>
        </authorList>
    </citation>
    <scope>FUNCTION</scope>
    <scope>DISRUPTION PHENOTYPE</scope>
    <scope>SUBCELLULAR LOCATION</scope>
</reference>
<keyword id="KW-1185">Reference proteome</keyword>
<keyword id="KW-0732">Signal</keyword>
<keyword id="KW-0926">Vacuole</keyword>
<sequence>MRVSSAIFTIASGIAAVSAADCAAAGDYDSQGRYSCNPAHQYPNGQSCKTIDGCPLLADASGQPIYKSTCAAPGDYDDKGRYSCNPAHQYPNGQSCKTVEGCPLLVDANGQPIVKATGTSTGTGTVTVTSSAAAQPTSTGTPSSKCAAPGDYDSKGRYSCNPAHQYPNGQTCKVIDNCPLLCDASGKPIVKATGTGSGNNGKPTDLPIVGAGSVLTGGMAMVAAAVVAAI</sequence>
<accession>J4KLP6</accession>
<protein>
    <recommendedName>
        <fullName evidence="3">Vacuole-localized protein 4</fullName>
    </recommendedName>
</protein>
<gene>
    <name evidence="3" type="primary">VLP4</name>
    <name type="ORF">BBA_08480</name>
</gene>
<name>VLP4_BEAB2</name>
<organism>
    <name type="scientific">Beauveria bassiana (strain ARSEF 2860)</name>
    <name type="common">White muscardine disease fungus</name>
    <name type="synonym">Tritirachium shiotae</name>
    <dbReference type="NCBI Taxonomy" id="655819"/>
    <lineage>
        <taxon>Eukaryota</taxon>
        <taxon>Fungi</taxon>
        <taxon>Dikarya</taxon>
        <taxon>Ascomycota</taxon>
        <taxon>Pezizomycotina</taxon>
        <taxon>Sordariomycetes</taxon>
        <taxon>Hypocreomycetidae</taxon>
        <taxon>Hypocreales</taxon>
        <taxon>Cordycipitaceae</taxon>
        <taxon>Beauveria</taxon>
    </lineage>
</organism>